<protein>
    <recommendedName>
        <fullName>Replicative DNA helicase DnaB</fullName>
        <ecNumber evidence="1">5.6.2.3</ecNumber>
    </recommendedName>
    <alternativeName>
        <fullName evidence="3">DNA 5'-3' helicase DnaB</fullName>
    </alternativeName>
</protein>
<reference key="1">
    <citation type="journal article" date="2004" name="J. Bacteriol.">
        <title>Complete genome sequence of Rickettsia typhi and comparison with sequences of other Rickettsiae.</title>
        <authorList>
            <person name="McLeod M.P."/>
            <person name="Qin X."/>
            <person name="Karpathy S.E."/>
            <person name="Gioia J."/>
            <person name="Highlander S.K."/>
            <person name="Fox G.E."/>
            <person name="McNeill T.Z."/>
            <person name="Jiang H."/>
            <person name="Muzny D."/>
            <person name="Jacob L.S."/>
            <person name="Hawes A.C."/>
            <person name="Sodergren E."/>
            <person name="Gill R."/>
            <person name="Hume J."/>
            <person name="Morgan M."/>
            <person name="Fan G."/>
            <person name="Amin A.G."/>
            <person name="Gibbs R.A."/>
            <person name="Hong C."/>
            <person name="Yu X.-J."/>
            <person name="Walker D.H."/>
            <person name="Weinstock G.M."/>
        </authorList>
    </citation>
    <scope>NUCLEOTIDE SEQUENCE [LARGE SCALE GENOMIC DNA]</scope>
    <source>
        <strain>ATCC VR-144 / Wilmington</strain>
    </source>
</reference>
<accession>Q68WJ2</accession>
<gene>
    <name type="primary">dnaB</name>
    <name type="ordered locus">RT0531</name>
</gene>
<comment type="function">
    <text evidence="1">The main replicative DNA helicase, it participates in initiation and elongation during chromosome replication. Travels ahead of the DNA replisome, separating dsDNA into templates for DNA synthesis. A processive ATP-dependent 5'-3' DNA helicase it has DNA-dependent ATPase activity.</text>
</comment>
<comment type="catalytic activity">
    <reaction evidence="1">
        <text>Couples ATP hydrolysis with the unwinding of duplex DNA at the replication fork by translocating in the 5'-3' direction. This creates two antiparallel DNA single strands (ssDNA). The leading ssDNA polymer is the template for DNA polymerase III holoenzyme which synthesizes a continuous strand.</text>
        <dbReference type="EC" id="5.6.2.3"/>
    </reaction>
</comment>
<comment type="catalytic activity">
    <reaction evidence="1">
        <text>ATP + H2O = ADP + phosphate + H(+)</text>
        <dbReference type="Rhea" id="RHEA:13065"/>
        <dbReference type="ChEBI" id="CHEBI:15377"/>
        <dbReference type="ChEBI" id="CHEBI:15378"/>
        <dbReference type="ChEBI" id="CHEBI:30616"/>
        <dbReference type="ChEBI" id="CHEBI:43474"/>
        <dbReference type="ChEBI" id="CHEBI:456216"/>
        <dbReference type="EC" id="5.6.2.3"/>
    </reaction>
</comment>
<comment type="subunit">
    <text evidence="1">Homohexamer.</text>
</comment>
<comment type="similarity">
    <text evidence="3">Belongs to the helicase family. DnaB subfamily.</text>
</comment>
<sequence length="497" mass="56194">MVRNKINNNINIITNNDDNLSIPRVLPSNIQAEQMLLGAIITNNELLSYVSEFLRNEHFFEPIHQKIYDAIEKIIEKGLIATPITLRSMLTQDALFQEIEGVEYLAKLITMSMMVINPIDYGKIIYDLAIKRNLINIGEEVVNNAYNASLAVAAKEQIEHAEAKLYDLAREGLNEKSFTQVGISIAESLASINKAMKNNDHVIGISTGLLDLDNKLFGFHNSDLIILAGRPSMGKTAFAINLALNTCNNMRLKNIRDNQEIKSVGFFSLEMSSEQLTTRLLSLCAEIDSTSLRTGMLSEEKYNRLRKEANTLSELQFFIDDTPALSISAIRTRARRMKRKHNLGILFIDYLQLIRGVSKSENRVNEISEITQGLKAIAKELNIPVIALSQLSRAVELREDKKPMLSDLRESGTIEQDADIVMFIYREEYYLTRKEPAAGDAKHAEWLDKLNKVYNIADIIIAKHRNGPVGNISLYYDSQFSKFGNLEKRTFNSILNT</sequence>
<feature type="chain" id="PRO_0000281068" description="Replicative DNA helicase DnaB">
    <location>
        <begin position="1"/>
        <end position="497"/>
    </location>
</feature>
<feature type="domain" description="SF4 helicase" evidence="2">
    <location>
        <begin position="198"/>
        <end position="490"/>
    </location>
</feature>
<feature type="binding site" evidence="2">
    <location>
        <begin position="229"/>
        <end position="236"/>
    </location>
    <ligand>
        <name>ATP</name>
        <dbReference type="ChEBI" id="CHEBI:30616"/>
    </ligand>
</feature>
<dbReference type="EC" id="5.6.2.3" evidence="1"/>
<dbReference type="EMBL" id="AE017197">
    <property type="protein sequence ID" value="AAU04000.1"/>
    <property type="molecule type" value="Genomic_DNA"/>
</dbReference>
<dbReference type="RefSeq" id="WP_011190981.1">
    <property type="nucleotide sequence ID" value="NC_006142.1"/>
</dbReference>
<dbReference type="SMR" id="Q68WJ2"/>
<dbReference type="KEGG" id="rty:RT0531"/>
<dbReference type="eggNOG" id="COG0305">
    <property type="taxonomic scope" value="Bacteria"/>
</dbReference>
<dbReference type="HOGENOM" id="CLU_005373_0_2_5"/>
<dbReference type="OrthoDB" id="9773982at2"/>
<dbReference type="Proteomes" id="UP000000604">
    <property type="component" value="Chromosome"/>
</dbReference>
<dbReference type="GO" id="GO:0005829">
    <property type="term" value="C:cytosol"/>
    <property type="evidence" value="ECO:0007669"/>
    <property type="project" value="TreeGrafter"/>
</dbReference>
<dbReference type="GO" id="GO:1990077">
    <property type="term" value="C:primosome complex"/>
    <property type="evidence" value="ECO:0007669"/>
    <property type="project" value="UniProtKB-KW"/>
</dbReference>
<dbReference type="GO" id="GO:0005524">
    <property type="term" value="F:ATP binding"/>
    <property type="evidence" value="ECO:0007669"/>
    <property type="project" value="UniProtKB-KW"/>
</dbReference>
<dbReference type="GO" id="GO:0016887">
    <property type="term" value="F:ATP hydrolysis activity"/>
    <property type="evidence" value="ECO:0007669"/>
    <property type="project" value="RHEA"/>
</dbReference>
<dbReference type="GO" id="GO:0003677">
    <property type="term" value="F:DNA binding"/>
    <property type="evidence" value="ECO:0007669"/>
    <property type="project" value="UniProtKB-KW"/>
</dbReference>
<dbReference type="GO" id="GO:0003678">
    <property type="term" value="F:DNA helicase activity"/>
    <property type="evidence" value="ECO:0007669"/>
    <property type="project" value="InterPro"/>
</dbReference>
<dbReference type="GO" id="GO:0006269">
    <property type="term" value="P:DNA replication, synthesis of primer"/>
    <property type="evidence" value="ECO:0007669"/>
    <property type="project" value="UniProtKB-KW"/>
</dbReference>
<dbReference type="CDD" id="cd00984">
    <property type="entry name" value="DnaB_C"/>
    <property type="match status" value="1"/>
</dbReference>
<dbReference type="Gene3D" id="1.10.860.10">
    <property type="entry name" value="DNAb Helicase, Chain A"/>
    <property type="match status" value="1"/>
</dbReference>
<dbReference type="Gene3D" id="3.40.50.300">
    <property type="entry name" value="P-loop containing nucleotide triphosphate hydrolases"/>
    <property type="match status" value="1"/>
</dbReference>
<dbReference type="InterPro" id="IPR036185">
    <property type="entry name" value="DNA_heli_DnaB-like_N_sf"/>
</dbReference>
<dbReference type="InterPro" id="IPR007692">
    <property type="entry name" value="DNA_helicase_DnaB"/>
</dbReference>
<dbReference type="InterPro" id="IPR007694">
    <property type="entry name" value="DNA_helicase_DnaB-like_C"/>
</dbReference>
<dbReference type="InterPro" id="IPR007693">
    <property type="entry name" value="DNA_helicase_DnaB-like_N"/>
</dbReference>
<dbReference type="InterPro" id="IPR016136">
    <property type="entry name" value="DNA_helicase_N/primase_C"/>
</dbReference>
<dbReference type="InterPro" id="IPR027417">
    <property type="entry name" value="P-loop_NTPase"/>
</dbReference>
<dbReference type="NCBIfam" id="TIGR00665">
    <property type="entry name" value="DnaB"/>
    <property type="match status" value="1"/>
</dbReference>
<dbReference type="NCBIfam" id="NF006606">
    <property type="entry name" value="PRK09165.1"/>
    <property type="match status" value="1"/>
</dbReference>
<dbReference type="PANTHER" id="PTHR30153:SF2">
    <property type="entry name" value="REPLICATIVE DNA HELICASE"/>
    <property type="match status" value="1"/>
</dbReference>
<dbReference type="PANTHER" id="PTHR30153">
    <property type="entry name" value="REPLICATIVE DNA HELICASE DNAB"/>
    <property type="match status" value="1"/>
</dbReference>
<dbReference type="Pfam" id="PF00772">
    <property type="entry name" value="DnaB"/>
    <property type="match status" value="1"/>
</dbReference>
<dbReference type="Pfam" id="PF03796">
    <property type="entry name" value="DnaB_C"/>
    <property type="match status" value="1"/>
</dbReference>
<dbReference type="SUPFAM" id="SSF48024">
    <property type="entry name" value="N-terminal domain of DnaB helicase"/>
    <property type="match status" value="1"/>
</dbReference>
<dbReference type="SUPFAM" id="SSF52540">
    <property type="entry name" value="P-loop containing nucleoside triphosphate hydrolases"/>
    <property type="match status" value="1"/>
</dbReference>
<dbReference type="PROSITE" id="PS51199">
    <property type="entry name" value="SF4_HELICASE"/>
    <property type="match status" value="1"/>
</dbReference>
<evidence type="ECO:0000250" key="1">
    <source>
        <dbReference type="UniProtKB" id="P0ACB0"/>
    </source>
</evidence>
<evidence type="ECO:0000255" key="2">
    <source>
        <dbReference type="PROSITE-ProRule" id="PRU00596"/>
    </source>
</evidence>
<evidence type="ECO:0000305" key="3"/>
<proteinExistence type="inferred from homology"/>
<keyword id="KW-0067">ATP-binding</keyword>
<keyword id="KW-0235">DNA replication</keyword>
<keyword id="KW-0238">DNA-binding</keyword>
<keyword id="KW-0347">Helicase</keyword>
<keyword id="KW-0378">Hydrolase</keyword>
<keyword id="KW-0413">Isomerase</keyword>
<keyword id="KW-0547">Nucleotide-binding</keyword>
<keyword id="KW-0639">Primosome</keyword>
<name>DNAB_RICTY</name>
<organism>
    <name type="scientific">Rickettsia typhi (strain ATCC VR-144 / Wilmington)</name>
    <dbReference type="NCBI Taxonomy" id="257363"/>
    <lineage>
        <taxon>Bacteria</taxon>
        <taxon>Pseudomonadati</taxon>
        <taxon>Pseudomonadota</taxon>
        <taxon>Alphaproteobacteria</taxon>
        <taxon>Rickettsiales</taxon>
        <taxon>Rickettsiaceae</taxon>
        <taxon>Rickettsieae</taxon>
        <taxon>Rickettsia</taxon>
        <taxon>typhus group</taxon>
    </lineage>
</organism>